<sequence length="106" mass="11307">GATVKVTNATFKSDVLESDKPVLVHFEGPWCGPCKMVAPVLDEIANEYEGKVKVAKVNTDENPQLASQYGVRSIPTRLMFKGGEVAANMVGAAPKTRLAAFLDASL</sequence>
<reference key="1">
    <citation type="journal article" date="1994" name="Gene">
        <title>PCR cloning and sequencing of the coding portion of the thioredoxin-encoding gene from Streptomyces aureofaciens BMK.</title>
        <authorList>
            <person name="Labudova O."/>
            <person name="Nemethova M."/>
            <person name="Turna J."/>
            <person name="Kollarova M."/>
        </authorList>
    </citation>
    <scope>NUCLEOTIDE SEQUENCE [GENOMIC DNA]</scope>
    <source>
        <strain>BMK</strain>
    </source>
</reference>
<protein>
    <recommendedName>
        <fullName>Thioredoxin</fullName>
        <shortName>Trx</shortName>
    </recommendedName>
</protein>
<organism>
    <name type="scientific">Kitasatospora aureofaciens</name>
    <name type="common">Streptomyces aureofaciens</name>
    <dbReference type="NCBI Taxonomy" id="1894"/>
    <lineage>
        <taxon>Bacteria</taxon>
        <taxon>Bacillati</taxon>
        <taxon>Actinomycetota</taxon>
        <taxon>Actinomycetes</taxon>
        <taxon>Kitasatosporales</taxon>
        <taxon>Streptomycetaceae</taxon>
        <taxon>Kitasatospora</taxon>
    </lineage>
</organism>
<keyword id="KW-1015">Disulfide bond</keyword>
<keyword id="KW-0249">Electron transport</keyword>
<keyword id="KW-0676">Redox-active center</keyword>
<keyword id="KW-0813">Transport</keyword>
<feature type="chain" id="PRO_0000120134" description="Thioredoxin">
    <location>
        <begin position="1" status="less than"/>
        <end position="106"/>
    </location>
</feature>
<feature type="domain" description="Thioredoxin" evidence="1">
    <location>
        <begin position="1" status="less than"/>
        <end position="106"/>
    </location>
</feature>
<feature type="disulfide bond" description="Redox-active" evidence="1">
    <location>
        <begin position="31"/>
        <end position="34"/>
    </location>
</feature>
<feature type="non-terminal residue">
    <location>
        <position position="1"/>
    </location>
</feature>
<dbReference type="EMBL" id="X72799">
    <property type="protein sequence ID" value="CAA51317.1"/>
    <property type="molecule type" value="Genomic_DNA"/>
</dbReference>
<dbReference type="PIR" id="S33357">
    <property type="entry name" value="S33357"/>
</dbReference>
<dbReference type="SMR" id="P33791"/>
<dbReference type="GO" id="GO:0005737">
    <property type="term" value="C:cytoplasm"/>
    <property type="evidence" value="ECO:0007669"/>
    <property type="project" value="TreeGrafter"/>
</dbReference>
<dbReference type="GO" id="GO:0015035">
    <property type="term" value="F:protein-disulfide reductase activity"/>
    <property type="evidence" value="ECO:0007669"/>
    <property type="project" value="InterPro"/>
</dbReference>
<dbReference type="CDD" id="cd02947">
    <property type="entry name" value="TRX_family"/>
    <property type="match status" value="1"/>
</dbReference>
<dbReference type="FunFam" id="3.40.30.10:FF:000001">
    <property type="entry name" value="Thioredoxin"/>
    <property type="match status" value="1"/>
</dbReference>
<dbReference type="Gene3D" id="3.40.30.10">
    <property type="entry name" value="Glutaredoxin"/>
    <property type="match status" value="1"/>
</dbReference>
<dbReference type="InterPro" id="IPR005746">
    <property type="entry name" value="Thioredoxin"/>
</dbReference>
<dbReference type="InterPro" id="IPR036249">
    <property type="entry name" value="Thioredoxin-like_sf"/>
</dbReference>
<dbReference type="InterPro" id="IPR017937">
    <property type="entry name" value="Thioredoxin_CS"/>
</dbReference>
<dbReference type="InterPro" id="IPR013766">
    <property type="entry name" value="Thioredoxin_domain"/>
</dbReference>
<dbReference type="NCBIfam" id="TIGR01068">
    <property type="entry name" value="thioredoxin"/>
    <property type="match status" value="1"/>
</dbReference>
<dbReference type="PANTHER" id="PTHR45663">
    <property type="entry name" value="GEO12009P1"/>
    <property type="match status" value="1"/>
</dbReference>
<dbReference type="PANTHER" id="PTHR45663:SF11">
    <property type="entry name" value="GEO12009P1"/>
    <property type="match status" value="1"/>
</dbReference>
<dbReference type="Pfam" id="PF00085">
    <property type="entry name" value="Thioredoxin"/>
    <property type="match status" value="1"/>
</dbReference>
<dbReference type="PIRSF" id="PIRSF000077">
    <property type="entry name" value="Thioredoxin"/>
    <property type="match status" value="1"/>
</dbReference>
<dbReference type="PRINTS" id="PR00421">
    <property type="entry name" value="THIOREDOXIN"/>
</dbReference>
<dbReference type="SUPFAM" id="SSF52833">
    <property type="entry name" value="Thioredoxin-like"/>
    <property type="match status" value="1"/>
</dbReference>
<dbReference type="PROSITE" id="PS00194">
    <property type="entry name" value="THIOREDOXIN_1"/>
    <property type="match status" value="1"/>
</dbReference>
<dbReference type="PROSITE" id="PS51352">
    <property type="entry name" value="THIOREDOXIN_2"/>
    <property type="match status" value="1"/>
</dbReference>
<comment type="function">
    <text>Participates in various redox reactions through the reversible oxidation of its active center dithiol to a disulfide and catalyzes dithiol-disulfide exchange reactions.</text>
</comment>
<comment type="similarity">
    <text evidence="2">Belongs to the thioredoxin family.</text>
</comment>
<gene>
    <name type="primary">trxA</name>
</gene>
<proteinExistence type="inferred from homology"/>
<evidence type="ECO:0000255" key="1">
    <source>
        <dbReference type="PROSITE-ProRule" id="PRU00691"/>
    </source>
</evidence>
<evidence type="ECO:0000305" key="2"/>
<name>THIO_KITAU</name>
<accession>P33791</accession>